<proteinExistence type="inferred from homology"/>
<name>EFTS_SHEB9</name>
<evidence type="ECO:0000255" key="1">
    <source>
        <dbReference type="HAMAP-Rule" id="MF_00050"/>
    </source>
</evidence>
<reference key="1">
    <citation type="submission" date="2007-11" db="EMBL/GenBank/DDBJ databases">
        <title>Complete sequence of chromosome of Shewanella baltica OS195.</title>
        <authorList>
            <consortium name="US DOE Joint Genome Institute"/>
            <person name="Copeland A."/>
            <person name="Lucas S."/>
            <person name="Lapidus A."/>
            <person name="Barry K."/>
            <person name="Glavina del Rio T."/>
            <person name="Dalin E."/>
            <person name="Tice H."/>
            <person name="Pitluck S."/>
            <person name="Chain P."/>
            <person name="Malfatti S."/>
            <person name="Shin M."/>
            <person name="Vergez L."/>
            <person name="Schmutz J."/>
            <person name="Larimer F."/>
            <person name="Land M."/>
            <person name="Hauser L."/>
            <person name="Kyrpides N."/>
            <person name="Kim E."/>
            <person name="Brettar I."/>
            <person name="Rodrigues J."/>
            <person name="Konstantinidis K."/>
            <person name="Klappenbach J."/>
            <person name="Hofle M."/>
            <person name="Tiedje J."/>
            <person name="Richardson P."/>
        </authorList>
    </citation>
    <scope>NUCLEOTIDE SEQUENCE [LARGE SCALE GENOMIC DNA]</scope>
    <source>
        <strain>OS195</strain>
    </source>
</reference>
<protein>
    <recommendedName>
        <fullName evidence="1">Elongation factor Ts</fullName>
        <shortName evidence="1">EF-Ts</shortName>
    </recommendedName>
</protein>
<comment type="function">
    <text evidence="1">Associates with the EF-Tu.GDP complex and induces the exchange of GDP to GTP. It remains bound to the aminoacyl-tRNA.EF-Tu.GTP complex up to the GTP hydrolysis stage on the ribosome.</text>
</comment>
<comment type="subcellular location">
    <subcellularLocation>
        <location evidence="1">Cytoplasm</location>
    </subcellularLocation>
</comment>
<comment type="similarity">
    <text evidence="1">Belongs to the EF-Ts family.</text>
</comment>
<dbReference type="EMBL" id="CP000891">
    <property type="protein sequence ID" value="ABX48655.1"/>
    <property type="molecule type" value="Genomic_DNA"/>
</dbReference>
<dbReference type="RefSeq" id="WP_006085247.1">
    <property type="nucleotide sequence ID" value="NC_009997.1"/>
</dbReference>
<dbReference type="SMR" id="A9KUK6"/>
<dbReference type="GeneID" id="11771731"/>
<dbReference type="KEGG" id="sbn:Sbal195_1482"/>
<dbReference type="HOGENOM" id="CLU_047155_0_2_6"/>
<dbReference type="Proteomes" id="UP000000770">
    <property type="component" value="Chromosome"/>
</dbReference>
<dbReference type="GO" id="GO:0005737">
    <property type="term" value="C:cytoplasm"/>
    <property type="evidence" value="ECO:0007669"/>
    <property type="project" value="UniProtKB-SubCell"/>
</dbReference>
<dbReference type="GO" id="GO:0003746">
    <property type="term" value="F:translation elongation factor activity"/>
    <property type="evidence" value="ECO:0007669"/>
    <property type="project" value="UniProtKB-UniRule"/>
</dbReference>
<dbReference type="CDD" id="cd14275">
    <property type="entry name" value="UBA_EF-Ts"/>
    <property type="match status" value="1"/>
</dbReference>
<dbReference type="FunFam" id="1.10.286.20:FF:000001">
    <property type="entry name" value="Elongation factor Ts"/>
    <property type="match status" value="1"/>
</dbReference>
<dbReference type="FunFam" id="1.10.8.10:FF:000001">
    <property type="entry name" value="Elongation factor Ts"/>
    <property type="match status" value="1"/>
</dbReference>
<dbReference type="FunFam" id="3.30.479.20:FF:000001">
    <property type="entry name" value="Elongation factor Ts"/>
    <property type="match status" value="1"/>
</dbReference>
<dbReference type="Gene3D" id="1.10.286.20">
    <property type="match status" value="1"/>
</dbReference>
<dbReference type="Gene3D" id="1.10.8.10">
    <property type="entry name" value="DNA helicase RuvA subunit, C-terminal domain"/>
    <property type="match status" value="1"/>
</dbReference>
<dbReference type="Gene3D" id="3.30.479.20">
    <property type="entry name" value="Elongation factor Ts, dimerisation domain"/>
    <property type="match status" value="2"/>
</dbReference>
<dbReference type="HAMAP" id="MF_00050">
    <property type="entry name" value="EF_Ts"/>
    <property type="match status" value="1"/>
</dbReference>
<dbReference type="InterPro" id="IPR036402">
    <property type="entry name" value="EF-Ts_dimer_sf"/>
</dbReference>
<dbReference type="InterPro" id="IPR001816">
    <property type="entry name" value="Transl_elong_EFTs/EF1B"/>
</dbReference>
<dbReference type="InterPro" id="IPR014039">
    <property type="entry name" value="Transl_elong_EFTs/EF1B_dimer"/>
</dbReference>
<dbReference type="InterPro" id="IPR018101">
    <property type="entry name" value="Transl_elong_Ts_CS"/>
</dbReference>
<dbReference type="InterPro" id="IPR009060">
    <property type="entry name" value="UBA-like_sf"/>
</dbReference>
<dbReference type="NCBIfam" id="TIGR00116">
    <property type="entry name" value="tsf"/>
    <property type="match status" value="1"/>
</dbReference>
<dbReference type="PANTHER" id="PTHR11741">
    <property type="entry name" value="ELONGATION FACTOR TS"/>
    <property type="match status" value="1"/>
</dbReference>
<dbReference type="PANTHER" id="PTHR11741:SF0">
    <property type="entry name" value="ELONGATION FACTOR TS, MITOCHONDRIAL"/>
    <property type="match status" value="1"/>
</dbReference>
<dbReference type="Pfam" id="PF00889">
    <property type="entry name" value="EF_TS"/>
    <property type="match status" value="1"/>
</dbReference>
<dbReference type="SUPFAM" id="SSF54713">
    <property type="entry name" value="Elongation factor Ts (EF-Ts), dimerisation domain"/>
    <property type="match status" value="2"/>
</dbReference>
<dbReference type="SUPFAM" id="SSF46934">
    <property type="entry name" value="UBA-like"/>
    <property type="match status" value="1"/>
</dbReference>
<dbReference type="PROSITE" id="PS01126">
    <property type="entry name" value="EF_TS_1"/>
    <property type="match status" value="1"/>
</dbReference>
<dbReference type="PROSITE" id="PS01127">
    <property type="entry name" value="EF_TS_2"/>
    <property type="match status" value="1"/>
</dbReference>
<accession>A9KUK6</accession>
<organism>
    <name type="scientific">Shewanella baltica (strain OS195)</name>
    <dbReference type="NCBI Taxonomy" id="399599"/>
    <lineage>
        <taxon>Bacteria</taxon>
        <taxon>Pseudomonadati</taxon>
        <taxon>Pseudomonadota</taxon>
        <taxon>Gammaproteobacteria</taxon>
        <taxon>Alteromonadales</taxon>
        <taxon>Shewanellaceae</taxon>
        <taxon>Shewanella</taxon>
    </lineage>
</organism>
<feature type="chain" id="PRO_1000074879" description="Elongation factor Ts">
    <location>
        <begin position="1"/>
        <end position="283"/>
    </location>
</feature>
<feature type="region of interest" description="Involved in Mg(2+) ion dislocation from EF-Tu" evidence="1">
    <location>
        <begin position="79"/>
        <end position="82"/>
    </location>
</feature>
<gene>
    <name evidence="1" type="primary">tsf</name>
    <name type="ordered locus">Sbal195_1482</name>
</gene>
<sequence length="283" mass="30392">MAITAAQVKELRDRTGAGMMDCKNALTETNGDMELAIDNMRKSGAAKAAKKAGNIAADGTILIKNGEGFAALLEVNCQTDFVAKDSNFLAFANAVLDAAAASKVTLEDLKAQFEDARVALVTKIGENINIRRVEYIDGANLSSYRHGERIGVVVAGEADEETLKHIAMHVAASKPEYVNPEDVPAEIVAREQALQIEMSMNEGKSAEIAEKMVLGRMKKFTGEISLTGQAYIMEPKKTVGEILKEKGAKVTNFIRLEVGEGIEKKEEDFAAEVAAQIAASKKA</sequence>
<keyword id="KW-0963">Cytoplasm</keyword>
<keyword id="KW-0251">Elongation factor</keyword>
<keyword id="KW-0648">Protein biosynthesis</keyword>